<comment type="function">
    <text evidence="1">Catalyzes the transfer of the diacylglyceryl group from phosphatidylglycerol to the sulfhydryl group of the N-terminal cysteine of a prolipoprotein, the first step in the formation of mature lipoproteins.</text>
</comment>
<comment type="catalytic activity">
    <reaction evidence="1">
        <text>L-cysteinyl-[prolipoprotein] + a 1,2-diacyl-sn-glycero-3-phospho-(1'-sn-glycerol) = an S-1,2-diacyl-sn-glyceryl-L-cysteinyl-[prolipoprotein] + sn-glycerol 1-phosphate + H(+)</text>
        <dbReference type="Rhea" id="RHEA:56712"/>
        <dbReference type="Rhea" id="RHEA-COMP:14679"/>
        <dbReference type="Rhea" id="RHEA-COMP:14680"/>
        <dbReference type="ChEBI" id="CHEBI:15378"/>
        <dbReference type="ChEBI" id="CHEBI:29950"/>
        <dbReference type="ChEBI" id="CHEBI:57685"/>
        <dbReference type="ChEBI" id="CHEBI:64716"/>
        <dbReference type="ChEBI" id="CHEBI:140658"/>
        <dbReference type="EC" id="2.5.1.145"/>
    </reaction>
</comment>
<comment type="pathway">
    <text evidence="1">Protein modification; lipoprotein biosynthesis (diacylglyceryl transfer).</text>
</comment>
<comment type="subcellular location">
    <subcellularLocation>
        <location evidence="1">Cell inner membrane</location>
        <topology evidence="1">Multi-pass membrane protein</topology>
    </subcellularLocation>
</comment>
<comment type="similarity">
    <text evidence="1">Belongs to the Lgt family.</text>
</comment>
<keyword id="KW-0997">Cell inner membrane</keyword>
<keyword id="KW-1003">Cell membrane</keyword>
<keyword id="KW-0472">Membrane</keyword>
<keyword id="KW-1185">Reference proteome</keyword>
<keyword id="KW-0808">Transferase</keyword>
<keyword id="KW-0812">Transmembrane</keyword>
<keyword id="KW-1133">Transmembrane helix</keyword>
<evidence type="ECO:0000255" key="1">
    <source>
        <dbReference type="HAMAP-Rule" id="MF_01147"/>
    </source>
</evidence>
<name>LGT_NITEU</name>
<reference key="1">
    <citation type="journal article" date="2003" name="J. Bacteriol.">
        <title>Complete genome sequence of the ammonia-oxidizing bacterium and obligate chemolithoautotroph Nitrosomonas europaea.</title>
        <authorList>
            <person name="Chain P."/>
            <person name="Lamerdin J.E."/>
            <person name="Larimer F.W."/>
            <person name="Regala W."/>
            <person name="Lao V."/>
            <person name="Land M.L."/>
            <person name="Hauser L."/>
            <person name="Hooper A.B."/>
            <person name="Klotz M.G."/>
            <person name="Norton J."/>
            <person name="Sayavedra-Soto L.A."/>
            <person name="Arciero D.M."/>
            <person name="Hommes N.G."/>
            <person name="Whittaker M.M."/>
            <person name="Arp D.J."/>
        </authorList>
    </citation>
    <scope>NUCLEOTIDE SEQUENCE [LARGE SCALE GENOMIC DNA]</scope>
    <source>
        <strain>ATCC 19718 / CIP 103999 / KCTC 2705 / NBRC 14298</strain>
    </source>
</reference>
<accession>Q820A4</accession>
<gene>
    <name evidence="1" type="primary">lgt</name>
    <name type="ordered locus">NE0105</name>
</gene>
<sequence>MLVHPQFDPVAISIGPLAVRWYGLMYLLGFSLFILLGRYRIRQQPNGVFTREMLDDALFYGVLGVILGGRLGHVLFYEPGYYLQHPLEILAIWQGGMSFHGGFLGVAIAMLCLARKYQLSWLAVTDFIAPLVPLGLGAGRIGNFINGELWGRPTDVPWGMIFPYADNLPRHPSQLYEFALEGLVLFALIWLYSAKPRPLGAVTGMFMIGYGAFRSFCEFFREPDDGFLGIMTLGISMGQWLSLPMIAAGIALLYWAYRYDGKPEKAARKLPRERKNRD</sequence>
<proteinExistence type="inferred from homology"/>
<dbReference type="EC" id="2.5.1.145" evidence="1"/>
<dbReference type="EMBL" id="AL954747">
    <property type="protein sequence ID" value="CAD84016.1"/>
    <property type="molecule type" value="Genomic_DNA"/>
</dbReference>
<dbReference type="RefSeq" id="WP_011110757.1">
    <property type="nucleotide sequence ID" value="NC_004757.1"/>
</dbReference>
<dbReference type="SMR" id="Q820A4"/>
<dbReference type="STRING" id="228410.NE0105"/>
<dbReference type="GeneID" id="87103319"/>
<dbReference type="KEGG" id="neu:NE0105"/>
<dbReference type="eggNOG" id="COG0682">
    <property type="taxonomic scope" value="Bacteria"/>
</dbReference>
<dbReference type="HOGENOM" id="CLU_013386_1_0_4"/>
<dbReference type="OrthoDB" id="871140at2"/>
<dbReference type="PhylomeDB" id="Q820A4"/>
<dbReference type="UniPathway" id="UPA00664"/>
<dbReference type="Proteomes" id="UP000001416">
    <property type="component" value="Chromosome"/>
</dbReference>
<dbReference type="GO" id="GO:0005886">
    <property type="term" value="C:plasma membrane"/>
    <property type="evidence" value="ECO:0007669"/>
    <property type="project" value="UniProtKB-SubCell"/>
</dbReference>
<dbReference type="GO" id="GO:0008961">
    <property type="term" value="F:phosphatidylglycerol-prolipoprotein diacylglyceryl transferase activity"/>
    <property type="evidence" value="ECO:0007669"/>
    <property type="project" value="UniProtKB-UniRule"/>
</dbReference>
<dbReference type="GO" id="GO:0042158">
    <property type="term" value="P:lipoprotein biosynthetic process"/>
    <property type="evidence" value="ECO:0007669"/>
    <property type="project" value="UniProtKB-UniRule"/>
</dbReference>
<dbReference type="HAMAP" id="MF_01147">
    <property type="entry name" value="Lgt"/>
    <property type="match status" value="1"/>
</dbReference>
<dbReference type="InterPro" id="IPR001640">
    <property type="entry name" value="Lgt"/>
</dbReference>
<dbReference type="NCBIfam" id="TIGR00544">
    <property type="entry name" value="lgt"/>
    <property type="match status" value="1"/>
</dbReference>
<dbReference type="PANTHER" id="PTHR30589:SF0">
    <property type="entry name" value="PHOSPHATIDYLGLYCEROL--PROLIPOPROTEIN DIACYLGLYCERYL TRANSFERASE"/>
    <property type="match status" value="1"/>
</dbReference>
<dbReference type="PANTHER" id="PTHR30589">
    <property type="entry name" value="PROLIPOPROTEIN DIACYLGLYCERYL TRANSFERASE"/>
    <property type="match status" value="1"/>
</dbReference>
<dbReference type="Pfam" id="PF01790">
    <property type="entry name" value="LGT"/>
    <property type="match status" value="1"/>
</dbReference>
<dbReference type="PROSITE" id="PS01311">
    <property type="entry name" value="LGT"/>
    <property type="match status" value="1"/>
</dbReference>
<organism>
    <name type="scientific">Nitrosomonas europaea (strain ATCC 19718 / CIP 103999 / KCTC 2705 / NBRC 14298)</name>
    <dbReference type="NCBI Taxonomy" id="228410"/>
    <lineage>
        <taxon>Bacteria</taxon>
        <taxon>Pseudomonadati</taxon>
        <taxon>Pseudomonadota</taxon>
        <taxon>Betaproteobacteria</taxon>
        <taxon>Nitrosomonadales</taxon>
        <taxon>Nitrosomonadaceae</taxon>
        <taxon>Nitrosomonas</taxon>
    </lineage>
</organism>
<feature type="chain" id="PRO_0000172642" description="Phosphatidylglycerol--prolipoprotein diacylglyceryl transferase">
    <location>
        <begin position="1"/>
        <end position="278"/>
    </location>
</feature>
<feature type="transmembrane region" description="Helical" evidence="1">
    <location>
        <begin position="17"/>
        <end position="37"/>
    </location>
</feature>
<feature type="transmembrane region" description="Helical" evidence="1">
    <location>
        <begin position="57"/>
        <end position="77"/>
    </location>
</feature>
<feature type="transmembrane region" description="Helical" evidence="1">
    <location>
        <begin position="89"/>
        <end position="109"/>
    </location>
</feature>
<feature type="transmembrane region" description="Helical" evidence="1">
    <location>
        <begin position="119"/>
        <end position="139"/>
    </location>
</feature>
<feature type="transmembrane region" description="Helical" evidence="1">
    <location>
        <begin position="174"/>
        <end position="194"/>
    </location>
</feature>
<feature type="transmembrane region" description="Helical" evidence="1">
    <location>
        <begin position="200"/>
        <end position="220"/>
    </location>
</feature>
<feature type="transmembrane region" description="Helical" evidence="1">
    <location>
        <begin position="233"/>
        <end position="253"/>
    </location>
</feature>
<feature type="binding site" evidence="1">
    <location>
        <position position="140"/>
    </location>
    <ligand>
        <name>a 1,2-diacyl-sn-glycero-3-phospho-(1'-sn-glycerol)</name>
        <dbReference type="ChEBI" id="CHEBI:64716"/>
    </ligand>
</feature>
<protein>
    <recommendedName>
        <fullName evidence="1">Phosphatidylglycerol--prolipoprotein diacylglyceryl transferase</fullName>
        <ecNumber evidence="1">2.5.1.145</ecNumber>
    </recommendedName>
</protein>